<name>GPH_PSEPU</name>
<feature type="chain" id="PRO_0000108035" description="Probable phosphoglycolate phosphatase">
    <location>
        <begin position="1" status="less than"/>
        <end position="251"/>
    </location>
</feature>
<feature type="binding site" evidence="1">
    <location>
        <position position="161"/>
    </location>
    <ligand>
        <name>Mg(2+)</name>
        <dbReference type="ChEBI" id="CHEBI:18420"/>
    </ligand>
</feature>
<feature type="non-terminal residue">
    <location>
        <position position="1"/>
    </location>
</feature>
<reference key="1">
    <citation type="journal article" date="1990" name="J. Bacteriol.">
        <title>Evolutionary differences in chromosomal locations of four early genes of the tryptophan pathway in fluorescent pseudomonads: DNA sequences and characterization of Pseudomonas putida trpE and trpGDC.</title>
        <authorList>
            <person name="Essar D.W."/>
            <person name="Eberly L."/>
            <person name="Crawford I.P."/>
        </authorList>
    </citation>
    <scope>NUCLEOTIDE SEQUENCE [GENOMIC DNA]</scope>
    <source>
        <strain>ATCC 23287 / C1S</strain>
    </source>
</reference>
<protein>
    <recommendedName>
        <fullName>Probable phosphoglycolate phosphatase</fullName>
        <shortName>PGP</shortName>
        <shortName>PGPase</shortName>
        <ecNumber>3.1.3.18</ecNumber>
    </recommendedName>
</protein>
<gene>
    <name type="primary">gph</name>
</gene>
<dbReference type="EC" id="3.1.3.18"/>
<dbReference type="EMBL" id="M33799">
    <property type="status" value="NOT_ANNOTATED_CDS"/>
    <property type="molecule type" value="Genomic_DNA"/>
</dbReference>
<dbReference type="PIR" id="F35115">
    <property type="entry name" value="F35115"/>
</dbReference>
<dbReference type="SMR" id="P42509"/>
<dbReference type="UniPathway" id="UPA00865">
    <property type="reaction ID" value="UER00834"/>
</dbReference>
<dbReference type="GO" id="GO:0005829">
    <property type="term" value="C:cytosol"/>
    <property type="evidence" value="ECO:0007669"/>
    <property type="project" value="TreeGrafter"/>
</dbReference>
<dbReference type="GO" id="GO:0046872">
    <property type="term" value="F:metal ion binding"/>
    <property type="evidence" value="ECO:0007669"/>
    <property type="project" value="UniProtKB-KW"/>
</dbReference>
<dbReference type="GO" id="GO:0008967">
    <property type="term" value="F:phosphoglycolate phosphatase activity"/>
    <property type="evidence" value="ECO:0007669"/>
    <property type="project" value="UniProtKB-EC"/>
</dbReference>
<dbReference type="GO" id="GO:0005975">
    <property type="term" value="P:carbohydrate metabolic process"/>
    <property type="evidence" value="ECO:0007669"/>
    <property type="project" value="InterPro"/>
</dbReference>
<dbReference type="GO" id="GO:0006281">
    <property type="term" value="P:DNA repair"/>
    <property type="evidence" value="ECO:0007669"/>
    <property type="project" value="TreeGrafter"/>
</dbReference>
<dbReference type="GO" id="GO:0046295">
    <property type="term" value="P:glycolate biosynthetic process"/>
    <property type="evidence" value="ECO:0007669"/>
    <property type="project" value="UniProtKB-UniPathway"/>
</dbReference>
<dbReference type="CDD" id="cd16417">
    <property type="entry name" value="HAD_PGPase"/>
    <property type="match status" value="1"/>
</dbReference>
<dbReference type="FunFam" id="3.40.50.1000:FF:000022">
    <property type="entry name" value="Phosphoglycolate phosphatase"/>
    <property type="match status" value="1"/>
</dbReference>
<dbReference type="Gene3D" id="3.40.50.1000">
    <property type="entry name" value="HAD superfamily/HAD-like"/>
    <property type="match status" value="1"/>
</dbReference>
<dbReference type="Gene3D" id="1.10.150.240">
    <property type="entry name" value="Putative phosphatase, domain 2"/>
    <property type="match status" value="1"/>
</dbReference>
<dbReference type="HAMAP" id="MF_00495">
    <property type="entry name" value="GPH_hydrolase_bact"/>
    <property type="match status" value="1"/>
</dbReference>
<dbReference type="InterPro" id="IPR050155">
    <property type="entry name" value="HAD-like_hydrolase_sf"/>
</dbReference>
<dbReference type="InterPro" id="IPR036412">
    <property type="entry name" value="HAD-like_sf"/>
</dbReference>
<dbReference type="InterPro" id="IPR006439">
    <property type="entry name" value="HAD-SF_hydro_IA"/>
</dbReference>
<dbReference type="InterPro" id="IPR041492">
    <property type="entry name" value="HAD_2"/>
</dbReference>
<dbReference type="InterPro" id="IPR023214">
    <property type="entry name" value="HAD_sf"/>
</dbReference>
<dbReference type="InterPro" id="IPR023198">
    <property type="entry name" value="PGP-like_dom2"/>
</dbReference>
<dbReference type="InterPro" id="IPR037512">
    <property type="entry name" value="PGPase_prok"/>
</dbReference>
<dbReference type="NCBIfam" id="TIGR01549">
    <property type="entry name" value="HAD-SF-IA-v1"/>
    <property type="match status" value="1"/>
</dbReference>
<dbReference type="NCBIfam" id="TIGR01509">
    <property type="entry name" value="HAD-SF-IA-v3"/>
    <property type="match status" value="1"/>
</dbReference>
<dbReference type="NCBIfam" id="TIGR01449">
    <property type="entry name" value="PGP_bact"/>
    <property type="match status" value="1"/>
</dbReference>
<dbReference type="NCBIfam" id="NF009695">
    <property type="entry name" value="PRK13222.1-2"/>
    <property type="match status" value="1"/>
</dbReference>
<dbReference type="NCBIfam" id="NF009698">
    <property type="entry name" value="PRK13223.1"/>
    <property type="match status" value="1"/>
</dbReference>
<dbReference type="PANTHER" id="PTHR43434">
    <property type="entry name" value="PHOSPHOGLYCOLATE PHOSPHATASE"/>
    <property type="match status" value="1"/>
</dbReference>
<dbReference type="PANTHER" id="PTHR43434:SF1">
    <property type="entry name" value="PHOSPHOGLYCOLATE PHOSPHATASE"/>
    <property type="match status" value="1"/>
</dbReference>
<dbReference type="Pfam" id="PF13419">
    <property type="entry name" value="HAD_2"/>
    <property type="match status" value="1"/>
</dbReference>
<dbReference type="PRINTS" id="PR00413">
    <property type="entry name" value="HADHALOGNASE"/>
</dbReference>
<dbReference type="SUPFAM" id="SSF56784">
    <property type="entry name" value="HAD-like"/>
    <property type="match status" value="1"/>
</dbReference>
<organism>
    <name type="scientific">Pseudomonas putida</name>
    <name type="common">Arthrobacter siderocapsulatus</name>
    <dbReference type="NCBI Taxonomy" id="303"/>
    <lineage>
        <taxon>Bacteria</taxon>
        <taxon>Pseudomonadati</taxon>
        <taxon>Pseudomonadota</taxon>
        <taxon>Gammaproteobacteria</taxon>
        <taxon>Pseudomonadales</taxon>
        <taxon>Pseudomonadaceae</taxon>
        <taxon>Pseudomonas</taxon>
    </lineage>
</organism>
<sequence length="251" mass="27465">GTLIDSVPDLAAAVDRMLLELGRPPADLEAVRHWVGNGAQVLVRRALAGGIEHDAVDDVLAEQGLALFMEAYAQSHELTVVYPGVKDTLRWLQKQGVEMALITNKPERFVAPLLDQMKIGRYFRWMIGGDTLPQKKPDPAALLFVMQMAGVTPQQSLFVGDSRSDVLAAKAAGVQCVGLTYGYNHGRPIHDETPSLVIDDLRALLPGCEDPATGITLADLQASQDRESTVAVTGKFWMKVIKALARWRWRA</sequence>
<accession>P42509</accession>
<evidence type="ECO:0000250" key="1"/>
<evidence type="ECO:0000305" key="2"/>
<proteinExistence type="inferred from homology"/>
<keyword id="KW-0119">Carbohydrate metabolism</keyword>
<keyword id="KW-0378">Hydrolase</keyword>
<keyword id="KW-0460">Magnesium</keyword>
<keyword id="KW-0479">Metal-binding</keyword>
<comment type="function">
    <text evidence="1">Specifically catalyzes the dephosphorylation of 2-phosphoglycolate. Is involved in the dissimilation of the intracellular 2-phosphoglycolate formed during the DNA repair of 3'-phosphoglycolate ends, a major class of DNA lesions induced by oxidative stress (By similarity).</text>
</comment>
<comment type="catalytic activity">
    <reaction>
        <text>2-phosphoglycolate + H2O = glycolate + phosphate</text>
        <dbReference type="Rhea" id="RHEA:14369"/>
        <dbReference type="ChEBI" id="CHEBI:15377"/>
        <dbReference type="ChEBI" id="CHEBI:29805"/>
        <dbReference type="ChEBI" id="CHEBI:43474"/>
        <dbReference type="ChEBI" id="CHEBI:58033"/>
        <dbReference type="EC" id="3.1.3.18"/>
    </reaction>
</comment>
<comment type="cofactor">
    <cofactor evidence="1">
        <name>Mg(2+)</name>
        <dbReference type="ChEBI" id="CHEBI:18420"/>
    </cofactor>
</comment>
<comment type="pathway">
    <text>Organic acid metabolism; glycolate biosynthesis; glycolate from 2-phosphoglycolate: step 1/1.</text>
</comment>
<comment type="similarity">
    <text evidence="2">Belongs to the HAD-like hydrolase superfamily. CbbY/CbbZ/Gph/YieH family.</text>
</comment>